<comment type="function">
    <text evidence="1">ATP-binding (A) component of a common energy-coupling factor (ECF) ABC-transporter complex. Unlike classic ABC transporters this ECF transporter provides the energy necessary to transport a number of different substrates.</text>
</comment>
<comment type="subunit">
    <text evidence="1">Forms a stable energy-coupling factor (ECF) transporter complex composed of 2 membrane-embedded substrate-binding proteins (S component), 2 ATP-binding proteins (A component) and 2 transmembrane proteins (T component).</text>
</comment>
<comment type="subcellular location">
    <subcellularLocation>
        <location evidence="1">Cell membrane</location>
        <topology evidence="1">Peripheral membrane protein</topology>
    </subcellularLocation>
</comment>
<comment type="similarity">
    <text evidence="1">Belongs to the ABC transporter superfamily. Energy-coupling factor EcfA family.</text>
</comment>
<sequence length="277" mass="30586">MHIIETQDLCHTYKGNIDALKNISFIAPRNTRIAIIGPNGAGKSTLFKHFNGVLKPTSGKVLIRGEPITKENIREVRRTVGLVFQNPDDQIFSPTVEQDVAFGPINMGLDEEAVKHRVSEALRTVGLSEYRTRVPHHLSGGEKKRVAIAGIIAMEPQVLVLDEPTAGLDPQGVREIIRFIRDFSVRYGMTVIFSTHNISLVAELAEYIYVMNNGSFVAEGTVAEIFSQPDLLSSVRLDLPILPKLISSLRSKGIAIDMGYTYQEAEIAFLKAFGKIA</sequence>
<organism>
    <name type="scientific">Methanospirillum hungatei JF-1 (strain ATCC 27890 / DSM 864 / NBRC 100397 / JF-1)</name>
    <dbReference type="NCBI Taxonomy" id="323259"/>
    <lineage>
        <taxon>Archaea</taxon>
        <taxon>Methanobacteriati</taxon>
        <taxon>Methanobacteriota</taxon>
        <taxon>Stenosarchaea group</taxon>
        <taxon>Methanomicrobia</taxon>
        <taxon>Methanomicrobiales</taxon>
        <taxon>Methanospirillaceae</taxon>
        <taxon>Methanospirillum</taxon>
    </lineage>
</organism>
<name>ECFA1_METHJ</name>
<gene>
    <name evidence="1" type="primary">ecfA1</name>
    <name type="synonym">cbiO1</name>
    <name type="ordered locus">Mhun_1478</name>
</gene>
<feature type="chain" id="PRO_0000288022" description="Energy-coupling factor transporter ATP-binding protein EcfA1">
    <location>
        <begin position="1"/>
        <end position="277"/>
    </location>
</feature>
<feature type="domain" description="ABC transporter" evidence="1">
    <location>
        <begin position="4"/>
        <end position="238"/>
    </location>
</feature>
<feature type="binding site" evidence="1">
    <location>
        <begin position="37"/>
        <end position="44"/>
    </location>
    <ligand>
        <name>ATP</name>
        <dbReference type="ChEBI" id="CHEBI:30616"/>
    </ligand>
</feature>
<keyword id="KW-0067">ATP-binding</keyword>
<keyword id="KW-1003">Cell membrane</keyword>
<keyword id="KW-0472">Membrane</keyword>
<keyword id="KW-0547">Nucleotide-binding</keyword>
<keyword id="KW-1185">Reference proteome</keyword>
<keyword id="KW-1278">Translocase</keyword>
<keyword id="KW-0813">Transport</keyword>
<reference key="1">
    <citation type="journal article" date="2016" name="Stand. Genomic Sci.">
        <title>Complete genome sequence of Methanospirillum hungatei type strain JF1.</title>
        <authorList>
            <person name="Gunsalus R.P."/>
            <person name="Cook L.E."/>
            <person name="Crable B."/>
            <person name="Rohlin L."/>
            <person name="McDonald E."/>
            <person name="Mouttaki H."/>
            <person name="Sieber J.R."/>
            <person name="Poweleit N."/>
            <person name="Zhou H."/>
            <person name="Lapidus A.L."/>
            <person name="Daligault H.E."/>
            <person name="Land M."/>
            <person name="Gilna P."/>
            <person name="Ivanova N."/>
            <person name="Kyrpides N."/>
            <person name="Culley D.E."/>
            <person name="McInerney M.J."/>
        </authorList>
    </citation>
    <scope>NUCLEOTIDE SEQUENCE [LARGE SCALE GENOMIC DNA]</scope>
    <source>
        <strain>ATCC 27890 / DSM 864 / NBRC 100397 / JF-1</strain>
    </source>
</reference>
<evidence type="ECO:0000255" key="1">
    <source>
        <dbReference type="HAMAP-Rule" id="MF_01710"/>
    </source>
</evidence>
<proteinExistence type="inferred from homology"/>
<protein>
    <recommendedName>
        <fullName evidence="1">Energy-coupling factor transporter ATP-binding protein EcfA1</fullName>
        <shortName evidence="1">ECF transporter A component EcfA1</shortName>
        <ecNumber evidence="1">7.-.-.-</ecNumber>
    </recommendedName>
</protein>
<accession>Q2FNX9</accession>
<dbReference type="EC" id="7.-.-.-" evidence="1"/>
<dbReference type="EMBL" id="CP000254">
    <property type="protein sequence ID" value="ABD41212.1"/>
    <property type="molecule type" value="Genomic_DNA"/>
</dbReference>
<dbReference type="RefSeq" id="WP_011448481.1">
    <property type="nucleotide sequence ID" value="NC_007796.1"/>
</dbReference>
<dbReference type="SMR" id="Q2FNX9"/>
<dbReference type="FunCoup" id="Q2FNX9">
    <property type="interactions" value="52"/>
</dbReference>
<dbReference type="STRING" id="323259.Mhun_1478"/>
<dbReference type="EnsemblBacteria" id="ABD41212">
    <property type="protein sequence ID" value="ABD41212"/>
    <property type="gene ID" value="Mhun_1478"/>
</dbReference>
<dbReference type="GeneID" id="3922180"/>
<dbReference type="KEGG" id="mhu:Mhun_1478"/>
<dbReference type="eggNOG" id="arCOG00202">
    <property type="taxonomic scope" value="Archaea"/>
</dbReference>
<dbReference type="HOGENOM" id="CLU_000604_1_22_2"/>
<dbReference type="InParanoid" id="Q2FNX9"/>
<dbReference type="OrthoDB" id="18209at2157"/>
<dbReference type="Proteomes" id="UP000001941">
    <property type="component" value="Chromosome"/>
</dbReference>
<dbReference type="GO" id="GO:0043190">
    <property type="term" value="C:ATP-binding cassette (ABC) transporter complex"/>
    <property type="evidence" value="ECO:0007669"/>
    <property type="project" value="TreeGrafter"/>
</dbReference>
<dbReference type="GO" id="GO:0005524">
    <property type="term" value="F:ATP binding"/>
    <property type="evidence" value="ECO:0007669"/>
    <property type="project" value="UniProtKB-KW"/>
</dbReference>
<dbReference type="GO" id="GO:0016887">
    <property type="term" value="F:ATP hydrolysis activity"/>
    <property type="evidence" value="ECO:0007669"/>
    <property type="project" value="InterPro"/>
</dbReference>
<dbReference type="GO" id="GO:0042626">
    <property type="term" value="F:ATPase-coupled transmembrane transporter activity"/>
    <property type="evidence" value="ECO:0007669"/>
    <property type="project" value="TreeGrafter"/>
</dbReference>
<dbReference type="GO" id="GO:0006824">
    <property type="term" value="P:cobalt ion transport"/>
    <property type="evidence" value="ECO:0007669"/>
    <property type="project" value="InterPro"/>
</dbReference>
<dbReference type="CDD" id="cd03225">
    <property type="entry name" value="ABC_cobalt_CbiO_domain1"/>
    <property type="match status" value="1"/>
</dbReference>
<dbReference type="FunFam" id="3.40.50.300:FF:000224">
    <property type="entry name" value="Energy-coupling factor transporter ATP-binding protein EcfA"/>
    <property type="match status" value="1"/>
</dbReference>
<dbReference type="Gene3D" id="3.40.50.300">
    <property type="entry name" value="P-loop containing nucleotide triphosphate hydrolases"/>
    <property type="match status" value="1"/>
</dbReference>
<dbReference type="InterPro" id="IPR003593">
    <property type="entry name" value="AAA+_ATPase"/>
</dbReference>
<dbReference type="InterPro" id="IPR003439">
    <property type="entry name" value="ABC_transporter-like_ATP-bd"/>
</dbReference>
<dbReference type="InterPro" id="IPR017871">
    <property type="entry name" value="ABC_transporter-like_CS"/>
</dbReference>
<dbReference type="InterPro" id="IPR015856">
    <property type="entry name" value="ABC_transpr_CbiO/EcfA_su"/>
</dbReference>
<dbReference type="InterPro" id="IPR005876">
    <property type="entry name" value="Co_trans_ATP-bd"/>
</dbReference>
<dbReference type="InterPro" id="IPR050095">
    <property type="entry name" value="ECF_ABC_transporter_ATP-bd"/>
</dbReference>
<dbReference type="InterPro" id="IPR027417">
    <property type="entry name" value="P-loop_NTPase"/>
</dbReference>
<dbReference type="NCBIfam" id="TIGR01166">
    <property type="entry name" value="cbiO"/>
    <property type="match status" value="1"/>
</dbReference>
<dbReference type="NCBIfam" id="NF010171">
    <property type="entry name" value="PRK13652.1"/>
    <property type="match status" value="1"/>
</dbReference>
<dbReference type="PANTHER" id="PTHR43553:SF24">
    <property type="entry name" value="ENERGY-COUPLING FACTOR TRANSPORTER ATP-BINDING PROTEIN ECFA1"/>
    <property type="match status" value="1"/>
</dbReference>
<dbReference type="PANTHER" id="PTHR43553">
    <property type="entry name" value="HEAVY METAL TRANSPORTER"/>
    <property type="match status" value="1"/>
</dbReference>
<dbReference type="Pfam" id="PF00005">
    <property type="entry name" value="ABC_tran"/>
    <property type="match status" value="1"/>
</dbReference>
<dbReference type="SMART" id="SM00382">
    <property type="entry name" value="AAA"/>
    <property type="match status" value="1"/>
</dbReference>
<dbReference type="SUPFAM" id="SSF52540">
    <property type="entry name" value="P-loop containing nucleoside triphosphate hydrolases"/>
    <property type="match status" value="1"/>
</dbReference>
<dbReference type="PROSITE" id="PS00211">
    <property type="entry name" value="ABC_TRANSPORTER_1"/>
    <property type="match status" value="1"/>
</dbReference>
<dbReference type="PROSITE" id="PS50893">
    <property type="entry name" value="ABC_TRANSPORTER_2"/>
    <property type="match status" value="1"/>
</dbReference>
<dbReference type="PROSITE" id="PS51246">
    <property type="entry name" value="CBIO"/>
    <property type="match status" value="1"/>
</dbReference>